<protein>
    <recommendedName>
        <fullName>Lysine--tRNA ligase</fullName>
        <ecNumber evidence="1">2.7.7.-</ecNumber>
        <ecNumber evidence="1">6.1.1.6</ecNumber>
    </recommendedName>
    <alternativeName>
        <fullName>Lysyl-tRNA synthetase</fullName>
        <shortName>LysRS</shortName>
    </alternativeName>
</protein>
<organism>
    <name type="scientific">Mus musculus</name>
    <name type="common">Mouse</name>
    <dbReference type="NCBI Taxonomy" id="10090"/>
    <lineage>
        <taxon>Eukaryota</taxon>
        <taxon>Metazoa</taxon>
        <taxon>Chordata</taxon>
        <taxon>Craniata</taxon>
        <taxon>Vertebrata</taxon>
        <taxon>Euteleostomi</taxon>
        <taxon>Mammalia</taxon>
        <taxon>Eutheria</taxon>
        <taxon>Euarchontoglires</taxon>
        <taxon>Glires</taxon>
        <taxon>Rodentia</taxon>
        <taxon>Myomorpha</taxon>
        <taxon>Muroidea</taxon>
        <taxon>Muridae</taxon>
        <taxon>Murinae</taxon>
        <taxon>Mus</taxon>
        <taxon>Mus</taxon>
    </lineage>
</organism>
<reference key="1">
    <citation type="journal article" date="2001" name="Mamm. Genome">
        <title>Genomic clustering of tRNA-specific adenosine deaminase ADAT1 and two tRNA synthetases.</title>
        <authorList>
            <person name="Maas S."/>
            <person name="Kim Y.G."/>
            <person name="Rich A."/>
        </authorList>
    </citation>
    <scope>NUCLEOTIDE SEQUENCE [GENOMIC DNA]</scope>
    <source>
        <strain>129/SvJ</strain>
    </source>
</reference>
<reference key="2">
    <citation type="journal article" date="2004" name="Genome Res.">
        <title>The status, quality, and expansion of the NIH full-length cDNA project: the Mammalian Gene Collection (MGC).</title>
        <authorList>
            <consortium name="The MGC Project Team"/>
        </authorList>
    </citation>
    <scope>NUCLEOTIDE SEQUENCE [LARGE SCALE MRNA]</scope>
    <source>
        <strain>FVB/N</strain>
        <tissue>Mammary gland</tissue>
    </source>
</reference>
<reference key="3">
    <citation type="journal article" date="2003" name="Gene">
        <title>The telomeric protein Rap1 is conserved in vertebrates and is expressed from a bidirectional promoter positioned between the Rap1 and KARS genes.</title>
        <authorList>
            <person name="Tan M."/>
            <person name="Wei C."/>
            <person name="Price C.M."/>
        </authorList>
    </citation>
    <scope>BIDIRECTIONAL PROMOTER WITH TERF2IP</scope>
</reference>
<reference key="4">
    <citation type="journal article" date="2002" name="Proc. Natl. Acad. Sci. U.S.A.">
        <title>p38 is essential for the assembly and stability of macromolecular tRNA synthetase complex: implications for its physiological significance.</title>
        <authorList>
            <person name="Kim J.Y."/>
            <person name="Kang Y.-S."/>
            <person name="Lee J.-W."/>
            <person name="Kim H.J."/>
            <person name="Ahn Y.H."/>
            <person name="Park H."/>
            <person name="Ko Y.-G."/>
            <person name="Kim S."/>
        </authorList>
    </citation>
    <scope>SUBUNIT</scope>
</reference>
<reference key="5">
    <citation type="journal article" date="2004" name="Immunity">
        <title>The function of lysyl-tRNA synthetase and Ap4A as signaling regulators of MITF activity in FcepsilonRI-activated mast cells.</title>
        <authorList>
            <person name="Lee Y.N."/>
            <person name="Nechushtan H."/>
            <person name="Figov N."/>
            <person name="Razin E."/>
        </authorList>
    </citation>
    <scope>INTERACTION WITH MIFT</scope>
</reference>
<reference key="6">
    <citation type="journal article" date="2007" name="Proc. Natl. Acad. Sci. U.S.A.">
        <title>Large-scale phosphorylation analysis of mouse liver.</title>
        <authorList>
            <person name="Villen J."/>
            <person name="Beausoleil S.A."/>
            <person name="Gerber S.A."/>
            <person name="Gygi S.P."/>
        </authorList>
    </citation>
    <scope>IDENTIFICATION BY MASS SPECTROMETRY [LARGE SCALE ANALYSIS]</scope>
    <source>
        <tissue>Liver</tissue>
    </source>
</reference>
<reference key="7">
    <citation type="journal article" date="2010" name="Cell">
        <title>A tissue-specific atlas of mouse protein phosphorylation and expression.</title>
        <authorList>
            <person name="Huttlin E.L."/>
            <person name="Jedrychowski M.P."/>
            <person name="Elias J.E."/>
            <person name="Goswami T."/>
            <person name="Rad R."/>
            <person name="Beausoleil S.A."/>
            <person name="Villen J."/>
            <person name="Haas W."/>
            <person name="Sowa M.E."/>
            <person name="Gygi S.P."/>
        </authorList>
    </citation>
    <scope>PHOSPHORYLATION [LARGE SCALE ANALYSIS] AT SER-393; SER-588; THR-589; SER-592 AND SER-594</scope>
    <scope>IDENTIFICATION BY MASS SPECTROMETRY [LARGE SCALE ANALYSIS]</scope>
    <source>
        <tissue>Brain</tissue>
        <tissue>Brown adipose tissue</tissue>
        <tissue>Heart</tissue>
        <tissue>Kidney</tissue>
        <tissue>Liver</tissue>
        <tissue>Lung</tissue>
        <tissue>Pancreas</tissue>
        <tissue>Spleen</tissue>
        <tissue>Testis</tissue>
    </source>
</reference>
<dbReference type="EC" id="2.7.7.-" evidence="1"/>
<dbReference type="EC" id="6.1.1.6" evidence="1"/>
<dbReference type="EMBL" id="AF328904">
    <property type="protein sequence ID" value="AAK19309.1"/>
    <property type="molecule type" value="Genomic_DNA"/>
</dbReference>
<dbReference type="EMBL" id="AF328894">
    <property type="protein sequence ID" value="AAK19309.1"/>
    <property type="status" value="JOINED"/>
    <property type="molecule type" value="Genomic_DNA"/>
</dbReference>
<dbReference type="EMBL" id="AF328895">
    <property type="protein sequence ID" value="AAK19309.1"/>
    <property type="status" value="JOINED"/>
    <property type="molecule type" value="Genomic_DNA"/>
</dbReference>
<dbReference type="EMBL" id="AF328896">
    <property type="protein sequence ID" value="AAK19309.1"/>
    <property type="status" value="JOINED"/>
    <property type="molecule type" value="Genomic_DNA"/>
</dbReference>
<dbReference type="EMBL" id="AF328897">
    <property type="protein sequence ID" value="AAK19309.1"/>
    <property type="status" value="JOINED"/>
    <property type="molecule type" value="Genomic_DNA"/>
</dbReference>
<dbReference type="EMBL" id="AF328898">
    <property type="protein sequence ID" value="AAK19309.1"/>
    <property type="status" value="JOINED"/>
    <property type="molecule type" value="Genomic_DNA"/>
</dbReference>
<dbReference type="EMBL" id="AF328899">
    <property type="protein sequence ID" value="AAK19309.1"/>
    <property type="status" value="JOINED"/>
    <property type="molecule type" value="Genomic_DNA"/>
</dbReference>
<dbReference type="EMBL" id="AF328900">
    <property type="protein sequence ID" value="AAK19309.1"/>
    <property type="status" value="JOINED"/>
    <property type="molecule type" value="Genomic_DNA"/>
</dbReference>
<dbReference type="EMBL" id="AF328901">
    <property type="protein sequence ID" value="AAK19309.1"/>
    <property type="status" value="JOINED"/>
    <property type="molecule type" value="Genomic_DNA"/>
</dbReference>
<dbReference type="EMBL" id="AF328902">
    <property type="protein sequence ID" value="AAK19309.1"/>
    <property type="status" value="JOINED"/>
    <property type="molecule type" value="Genomic_DNA"/>
</dbReference>
<dbReference type="EMBL" id="AF328903">
    <property type="protein sequence ID" value="AAK19309.1"/>
    <property type="status" value="JOINED"/>
    <property type="molecule type" value="Genomic_DNA"/>
</dbReference>
<dbReference type="EMBL" id="BC036289">
    <property type="protein sequence ID" value="AAH36289.1"/>
    <property type="molecule type" value="mRNA"/>
</dbReference>
<dbReference type="CCDS" id="CCDS40481.1"/>
<dbReference type="RefSeq" id="NP_444322.1">
    <property type="nucleotide sequence ID" value="NM_053092.3"/>
</dbReference>
<dbReference type="SMR" id="Q99MN1"/>
<dbReference type="BioGRID" id="220220">
    <property type="interactions" value="32"/>
</dbReference>
<dbReference type="DIP" id="DIP-36058N"/>
<dbReference type="FunCoup" id="Q99MN1">
    <property type="interactions" value="3617"/>
</dbReference>
<dbReference type="IntAct" id="Q99MN1">
    <property type="interactions" value="3"/>
</dbReference>
<dbReference type="STRING" id="10090.ENSMUSP00000126268"/>
<dbReference type="GlyGen" id="Q99MN1">
    <property type="glycosylation" value="1 site, 1 O-linked glycan (1 site)"/>
</dbReference>
<dbReference type="iPTMnet" id="Q99MN1"/>
<dbReference type="MetOSite" id="Q99MN1"/>
<dbReference type="PhosphoSitePlus" id="Q99MN1"/>
<dbReference type="SwissPalm" id="Q99MN1"/>
<dbReference type="jPOST" id="Q99MN1"/>
<dbReference type="PaxDb" id="10090-ENSMUSP00000126268"/>
<dbReference type="ProteomicsDB" id="253438"/>
<dbReference type="Pumba" id="Q99MN1"/>
<dbReference type="Antibodypedia" id="16841">
    <property type="antibodies" value="247 antibodies from 36 providers"/>
</dbReference>
<dbReference type="DNASU" id="85305"/>
<dbReference type="Ensembl" id="ENSMUST00000034426.14">
    <property type="protein sequence ID" value="ENSMUSP00000034426.7"/>
    <property type="gene ID" value="ENSMUSG00000031948.15"/>
</dbReference>
<dbReference type="GeneID" id="85305"/>
<dbReference type="KEGG" id="mmu:85305"/>
<dbReference type="UCSC" id="uc009nne.3">
    <property type="organism name" value="mouse"/>
</dbReference>
<dbReference type="AGR" id="MGI:1934754"/>
<dbReference type="CTD" id="3735"/>
<dbReference type="MGI" id="MGI:1934754">
    <property type="gene designation" value="Kars1"/>
</dbReference>
<dbReference type="VEuPathDB" id="HostDB:ENSMUSG00000031948"/>
<dbReference type="eggNOG" id="KOG1885">
    <property type="taxonomic scope" value="Eukaryota"/>
</dbReference>
<dbReference type="GeneTree" id="ENSGT01030000234618"/>
<dbReference type="HOGENOM" id="CLU_008255_6_0_1"/>
<dbReference type="InParanoid" id="Q99MN1"/>
<dbReference type="OMA" id="DFRNEGM"/>
<dbReference type="OrthoDB" id="21243at2759"/>
<dbReference type="PhylomeDB" id="Q99MN1"/>
<dbReference type="BRENDA" id="6.1.1.6">
    <property type="organism ID" value="3474"/>
</dbReference>
<dbReference type="Reactome" id="R-MMU-9856649">
    <property type="pathway name" value="Transcriptional and post-translational regulation of MITF-M expression and activity"/>
</dbReference>
<dbReference type="BioGRID-ORCS" id="85305">
    <property type="hits" value="28 hits in 80 CRISPR screens"/>
</dbReference>
<dbReference type="CD-CODE" id="CE726F99">
    <property type="entry name" value="Postsynaptic density"/>
</dbReference>
<dbReference type="ChiTaRS" id="Kars">
    <property type="organism name" value="mouse"/>
</dbReference>
<dbReference type="PRO" id="PR:Q99MN1"/>
<dbReference type="Proteomes" id="UP000000589">
    <property type="component" value="Chromosome 8"/>
</dbReference>
<dbReference type="RNAct" id="Q99MN1">
    <property type="molecule type" value="protein"/>
</dbReference>
<dbReference type="Bgee" id="ENSMUSG00000031948">
    <property type="expression patterns" value="Expressed in primitive streak and 274 other cell types or tissues"/>
</dbReference>
<dbReference type="ExpressionAtlas" id="Q99MN1">
    <property type="expression patterns" value="baseline and differential"/>
</dbReference>
<dbReference type="GO" id="GO:0017101">
    <property type="term" value="C:aminoacyl-tRNA synthetase multienzyme complex"/>
    <property type="evidence" value="ECO:0000314"/>
    <property type="project" value="CAFA"/>
</dbReference>
<dbReference type="GO" id="GO:0005829">
    <property type="term" value="C:cytosol"/>
    <property type="evidence" value="ECO:0000250"/>
    <property type="project" value="UniProtKB"/>
</dbReference>
<dbReference type="GO" id="GO:0005576">
    <property type="term" value="C:extracellular region"/>
    <property type="evidence" value="ECO:0007669"/>
    <property type="project" value="UniProtKB-SubCell"/>
</dbReference>
<dbReference type="GO" id="GO:0005739">
    <property type="term" value="C:mitochondrion"/>
    <property type="evidence" value="ECO:0007005"/>
    <property type="project" value="MGI"/>
</dbReference>
<dbReference type="GO" id="GO:0005634">
    <property type="term" value="C:nucleus"/>
    <property type="evidence" value="ECO:0000250"/>
    <property type="project" value="UniProtKB"/>
</dbReference>
<dbReference type="GO" id="GO:0005886">
    <property type="term" value="C:plasma membrane"/>
    <property type="evidence" value="ECO:0007669"/>
    <property type="project" value="UniProtKB-SubCell"/>
</dbReference>
<dbReference type="GO" id="GO:0005524">
    <property type="term" value="F:ATP binding"/>
    <property type="evidence" value="ECO:0007669"/>
    <property type="project" value="UniProtKB-KW"/>
</dbReference>
<dbReference type="GO" id="GO:0003877">
    <property type="term" value="F:ATP:ADP adenylyltransferase activity"/>
    <property type="evidence" value="ECO:0000250"/>
    <property type="project" value="UniProtKB"/>
</dbReference>
<dbReference type="GO" id="GO:0004824">
    <property type="term" value="F:lysine-tRNA ligase activity"/>
    <property type="evidence" value="ECO:0000250"/>
    <property type="project" value="UniProtKB"/>
</dbReference>
<dbReference type="GO" id="GO:0003676">
    <property type="term" value="F:nucleic acid binding"/>
    <property type="evidence" value="ECO:0007669"/>
    <property type="project" value="InterPro"/>
</dbReference>
<dbReference type="GO" id="GO:0097110">
    <property type="term" value="F:scaffold protein binding"/>
    <property type="evidence" value="ECO:0000353"/>
    <property type="project" value="CAFA"/>
</dbReference>
<dbReference type="GO" id="GO:0015966">
    <property type="term" value="P:diadenosine tetraphosphate biosynthetic process"/>
    <property type="evidence" value="ECO:0000250"/>
    <property type="project" value="UniProtKB"/>
</dbReference>
<dbReference type="GO" id="GO:0006430">
    <property type="term" value="P:lysyl-tRNA aminoacylation"/>
    <property type="evidence" value="ECO:0000250"/>
    <property type="project" value="UniProtKB"/>
</dbReference>
<dbReference type="CDD" id="cd00775">
    <property type="entry name" value="LysRS_core"/>
    <property type="match status" value="1"/>
</dbReference>
<dbReference type="CDD" id="cd04322">
    <property type="entry name" value="LysRS_N"/>
    <property type="match status" value="1"/>
</dbReference>
<dbReference type="FunFam" id="2.40.50.140:FF:000050">
    <property type="entry name" value="Lysine--tRNA ligase"/>
    <property type="match status" value="1"/>
</dbReference>
<dbReference type="FunFam" id="3.30.930.10:FF:000029">
    <property type="entry name" value="Lysine--tRNA ligase"/>
    <property type="match status" value="1"/>
</dbReference>
<dbReference type="Gene3D" id="3.30.930.10">
    <property type="entry name" value="Bira Bifunctional Protein, Domain 2"/>
    <property type="match status" value="1"/>
</dbReference>
<dbReference type="Gene3D" id="2.40.50.140">
    <property type="entry name" value="Nucleic acid-binding proteins"/>
    <property type="match status" value="1"/>
</dbReference>
<dbReference type="HAMAP" id="MF_00252">
    <property type="entry name" value="Lys_tRNA_synth_class2"/>
    <property type="match status" value="1"/>
</dbReference>
<dbReference type="InterPro" id="IPR004364">
    <property type="entry name" value="Aa-tRNA-synt_II"/>
</dbReference>
<dbReference type="InterPro" id="IPR006195">
    <property type="entry name" value="aa-tRNA-synth_II"/>
</dbReference>
<dbReference type="InterPro" id="IPR045864">
    <property type="entry name" value="aa-tRNA-synth_II/BPL/LPL"/>
</dbReference>
<dbReference type="InterPro" id="IPR002313">
    <property type="entry name" value="Lys-tRNA-ligase_II"/>
</dbReference>
<dbReference type="InterPro" id="IPR034762">
    <property type="entry name" value="Lys-tRNA-ligase_II_bac/euk"/>
</dbReference>
<dbReference type="InterPro" id="IPR044136">
    <property type="entry name" value="Lys-tRNA-ligase_II_N"/>
</dbReference>
<dbReference type="InterPro" id="IPR018149">
    <property type="entry name" value="Lys-tRNA-synth_II_C"/>
</dbReference>
<dbReference type="InterPro" id="IPR012340">
    <property type="entry name" value="NA-bd_OB-fold"/>
</dbReference>
<dbReference type="InterPro" id="IPR004365">
    <property type="entry name" value="NA-bd_OB_tRNA"/>
</dbReference>
<dbReference type="NCBIfam" id="TIGR00499">
    <property type="entry name" value="lysS_bact"/>
    <property type="match status" value="1"/>
</dbReference>
<dbReference type="NCBIfam" id="NF001756">
    <property type="entry name" value="PRK00484.1"/>
    <property type="match status" value="1"/>
</dbReference>
<dbReference type="PANTHER" id="PTHR42918:SF9">
    <property type="entry name" value="LYSINE--TRNA LIGASE"/>
    <property type="match status" value="1"/>
</dbReference>
<dbReference type="PANTHER" id="PTHR42918">
    <property type="entry name" value="LYSYL-TRNA SYNTHETASE"/>
    <property type="match status" value="1"/>
</dbReference>
<dbReference type="Pfam" id="PF00152">
    <property type="entry name" value="tRNA-synt_2"/>
    <property type="match status" value="1"/>
</dbReference>
<dbReference type="Pfam" id="PF01336">
    <property type="entry name" value="tRNA_anti-codon"/>
    <property type="match status" value="1"/>
</dbReference>
<dbReference type="PIRSF" id="PIRSF039101">
    <property type="entry name" value="LysRS2"/>
    <property type="match status" value="1"/>
</dbReference>
<dbReference type="PRINTS" id="PR00982">
    <property type="entry name" value="TRNASYNTHLYS"/>
</dbReference>
<dbReference type="SUPFAM" id="SSF55681">
    <property type="entry name" value="Class II aaRS and biotin synthetases"/>
    <property type="match status" value="1"/>
</dbReference>
<dbReference type="SUPFAM" id="SSF50249">
    <property type="entry name" value="Nucleic acid-binding proteins"/>
    <property type="match status" value="1"/>
</dbReference>
<dbReference type="PROSITE" id="PS50862">
    <property type="entry name" value="AA_TRNA_LIGASE_II"/>
    <property type="match status" value="1"/>
</dbReference>
<proteinExistence type="evidence at protein level"/>
<evidence type="ECO:0000250" key="1">
    <source>
        <dbReference type="UniProtKB" id="Q15046"/>
    </source>
</evidence>
<evidence type="ECO:0000250" key="2">
    <source>
        <dbReference type="UniProtKB" id="Q5XIM7"/>
    </source>
</evidence>
<evidence type="ECO:0000256" key="3">
    <source>
        <dbReference type="SAM" id="MobiDB-lite"/>
    </source>
</evidence>
<evidence type="ECO:0000269" key="4">
    <source>
    </source>
</evidence>
<evidence type="ECO:0000305" key="5"/>
<evidence type="ECO:0000305" key="6">
    <source>
    </source>
</evidence>
<evidence type="ECO:0000312" key="7">
    <source>
        <dbReference type="MGI" id="MGI:1934754"/>
    </source>
</evidence>
<evidence type="ECO:0007744" key="8">
    <source>
    </source>
</evidence>
<gene>
    <name evidence="1" type="primary">Kars1</name>
    <name evidence="7" type="synonym">Kars</name>
</gene>
<sequence length="595" mass="67840">MATLQESEVKVDGEQKLSKNELKRRLKAEKKLAEKEAKQKELSEKQLNQTASAPNHTADNGVGAEEETLDPNQYYKIRSQAVQQLKVTGEDPYPHKFHVDISLTQFIQEYSHLQPGDHLTDVTLKVAGRIHAKRASGGKLIFYDLRGEGVKLQVMANSRNYKSEEEFVHINNKLRRGDIIGVEGNPGKTKKGELSIIPQEITLLSPCLHMLPHLHFGLKDKETRYRQRYLDLILNDFVRQKFIVRSKIITYIRSFLDELGFLEIETPMMNIIPGGAVAKPFITYHNELDMNLYMRIAPELYHKMLVVGGIDRVYEIGRQFRNEGIDLTHNPEFTTCEFYMAYADYHDLMEITEKMLSGMVKSITGSYKITYHPDGPEGQAYEVDFTPPFRRISMVEELEKALGVKLPETSLFETEETRKILDDICVAKAVECPPPRTTARLLDKLVGEFLEVTCISPTFICDHPQIMSPLAKWHRSKEGLTERFELFVMKKEICNAYTELNDPVRQRQLFEEQAKAKAAGDDEAMFIDENFCTALEYGLPPTAGWGMGIDRLTMFLTDSNNIKEVLLFPAMKPEDKKETAATTETPESTEASPSV</sequence>
<accession>Q99MN1</accession>
<keyword id="KW-0007">Acetylation</keyword>
<keyword id="KW-0030">Aminoacyl-tRNA synthetase</keyword>
<keyword id="KW-0067">ATP-binding</keyword>
<keyword id="KW-1003">Cell membrane</keyword>
<keyword id="KW-0963">Cytoplasm</keyword>
<keyword id="KW-0436">Ligase</keyword>
<keyword id="KW-0472">Membrane</keyword>
<keyword id="KW-0547">Nucleotide-binding</keyword>
<keyword id="KW-0539">Nucleus</keyword>
<keyword id="KW-0597">Phosphoprotein</keyword>
<keyword id="KW-0648">Protein biosynthesis</keyword>
<keyword id="KW-1185">Reference proteome</keyword>
<keyword id="KW-0964">Secreted</keyword>
<keyword id="KW-0808">Transferase</keyword>
<comment type="function">
    <text evidence="1">Catalyzes the specific attachment of an amino acid to its cognate tRNA in a 2 step reaction: the amino acid (AA) is first activated by ATP to form AA-AMP and then transferred to the acceptor end of the tRNA. When secreted, acts as a signaling molecule that induces immune response through the activation of monocyte/macrophages. Catalyzes the synthesis of the signaling molecule diadenosine tetraphosphate (Ap4A), and thereby mediates disruption of the complex between HINT1 and MITF and the concomitant activation of MITF transcriptional activity.</text>
</comment>
<comment type="catalytic activity">
    <reaction evidence="1">
        <text>tRNA(Lys) + L-lysine + ATP = L-lysyl-tRNA(Lys) + AMP + diphosphate</text>
        <dbReference type="Rhea" id="RHEA:20792"/>
        <dbReference type="Rhea" id="RHEA-COMP:9696"/>
        <dbReference type="Rhea" id="RHEA-COMP:9697"/>
        <dbReference type="ChEBI" id="CHEBI:30616"/>
        <dbReference type="ChEBI" id="CHEBI:32551"/>
        <dbReference type="ChEBI" id="CHEBI:33019"/>
        <dbReference type="ChEBI" id="CHEBI:78442"/>
        <dbReference type="ChEBI" id="CHEBI:78529"/>
        <dbReference type="ChEBI" id="CHEBI:456215"/>
        <dbReference type="EC" id="6.1.1.6"/>
    </reaction>
</comment>
<comment type="subunit">
    <text evidence="1 4">Homodimer (By similarity). Part of the multisynthetase complex (MSC), a multisubunit complex that groups tRNA ligases for Arg (RARS), Asp (DARS), Gln (QARS), Ile (IARS), Leu (LARS), Lys (KARS), Met (MARS) the bifunctional ligase for Glu and Pro (EPRS) and the auxiliary subunits AIMP1/p43, AIMP2/p38 and EEF1E1/p18 (PubMed:14975237). Interacts with AIMP2 (via N-terminus) and MITF (PubMed:14975237). Interacts with TARSL2 (By similarity).</text>
</comment>
<comment type="subcellular location">
    <subcellularLocation>
        <location evidence="1">Cytoplasm</location>
        <location evidence="1">Cytosol</location>
    </subcellularLocation>
    <subcellularLocation>
        <location evidence="1">Cytoplasm</location>
    </subcellularLocation>
    <subcellularLocation>
        <location evidence="1">Nucleus</location>
    </subcellularLocation>
    <subcellularLocation>
        <location evidence="1">Cell membrane</location>
        <topology evidence="1">Peripheral membrane protein</topology>
    </subcellularLocation>
    <subcellularLocation>
        <location evidence="1">Secreted</location>
    </subcellularLocation>
    <text evidence="1">Secretion is induced by TNF-alpha. Cytosolic in quiescent mast cells. Translocates into the nucleus in response to mast cell activation by immunoglobulin E.</text>
</comment>
<comment type="domain">
    <text evidence="1">The N-terminal domain (1-65) is a functional tRNA-binding domain and is involved in the interaction with DARS, but has a repulsive role in the binding to EEF1A1. A central domain (208-259) is involved in homodimerization. The C-terminal domain (452-597) is not required for interaction with AIMP2 (By similarity).</text>
</comment>
<comment type="PTM">
    <text evidence="2">Phosphorylated on a serine residue after mast cell stimulation with immunoglobulin E (IgE).</text>
</comment>
<comment type="miscellaneous">
    <text evidence="5">It is likely that the same gene provides both this cytoplasmic isoform and an additional mitochondrial isoform.</text>
</comment>
<comment type="miscellaneous">
    <text evidence="6">Shares a bidirectional promoter with Terf2ip/Rap1.</text>
</comment>
<comment type="similarity">
    <text evidence="5">Belongs to the class-II aminoacyl-tRNA synthetase family.</text>
</comment>
<feature type="initiator methionine" description="Removed" evidence="1">
    <location>
        <position position="1"/>
    </location>
</feature>
<feature type="chain" id="PRO_0000152766" description="Lysine--tRNA ligase">
    <location>
        <begin position="2"/>
        <end position="595"/>
    </location>
</feature>
<feature type="region of interest" description="Disordered" evidence="3">
    <location>
        <begin position="1"/>
        <end position="66"/>
    </location>
</feature>
<feature type="region of interest" description="Disordered" evidence="3">
    <location>
        <begin position="573"/>
        <end position="595"/>
    </location>
</feature>
<feature type="compositionally biased region" description="Basic and acidic residues" evidence="3">
    <location>
        <begin position="7"/>
        <end position="44"/>
    </location>
</feature>
<feature type="compositionally biased region" description="Polar residues" evidence="3">
    <location>
        <begin position="48"/>
        <end position="58"/>
    </location>
</feature>
<feature type="compositionally biased region" description="Low complexity" evidence="3">
    <location>
        <begin position="580"/>
        <end position="595"/>
    </location>
</feature>
<feature type="binding site" evidence="1">
    <location>
        <position position="275"/>
    </location>
    <ligand>
        <name>substrate</name>
    </ligand>
</feature>
<feature type="binding site" evidence="1">
    <location>
        <position position="299"/>
    </location>
    <ligand>
        <name>substrate</name>
    </ligand>
</feature>
<feature type="binding site" evidence="1">
    <location>
        <begin position="321"/>
        <end position="323"/>
    </location>
    <ligand>
        <name>ATP</name>
        <dbReference type="ChEBI" id="CHEBI:30616"/>
    </ligand>
</feature>
<feature type="binding site" evidence="1">
    <location>
        <begin position="329"/>
        <end position="330"/>
    </location>
    <ligand>
        <name>ATP</name>
        <dbReference type="ChEBI" id="CHEBI:30616"/>
    </ligand>
</feature>
<feature type="binding site" evidence="1">
    <location>
        <position position="337"/>
    </location>
    <ligand>
        <name>substrate</name>
    </ligand>
</feature>
<feature type="binding site" evidence="1">
    <location>
        <position position="339"/>
    </location>
    <ligand>
        <name>substrate</name>
    </ligand>
</feature>
<feature type="binding site" evidence="1">
    <location>
        <begin position="492"/>
        <end position="493"/>
    </location>
    <ligand>
        <name>ATP</name>
        <dbReference type="ChEBI" id="CHEBI:30616"/>
    </ligand>
</feature>
<feature type="binding site" evidence="1">
    <location>
        <position position="495"/>
    </location>
    <ligand>
        <name>substrate</name>
    </ligand>
</feature>
<feature type="binding site" evidence="1">
    <location>
        <position position="499"/>
    </location>
    <ligand>
        <name>substrate</name>
    </ligand>
</feature>
<feature type="binding site" evidence="1">
    <location>
        <begin position="548"/>
        <end position="551"/>
    </location>
    <ligand>
        <name>ATP</name>
        <dbReference type="ChEBI" id="CHEBI:30616"/>
    </ligand>
</feature>
<feature type="modified residue" description="N-acetylalanine" evidence="1">
    <location>
        <position position="2"/>
    </location>
</feature>
<feature type="modified residue" description="N6-acetyllysine" evidence="1">
    <location>
        <position position="86"/>
    </location>
</feature>
<feature type="modified residue" description="N6-acetyllysine" evidence="1">
    <location>
        <position position="139"/>
    </location>
</feature>
<feature type="modified residue" description="Phosphoserine" evidence="1">
    <location>
        <position position="205"/>
    </location>
</feature>
<feature type="modified residue" description="Phosphoserine" evidence="8">
    <location>
        <position position="393"/>
    </location>
</feature>
<feature type="modified residue" description="Phosphoserine" evidence="8">
    <location>
        <position position="588"/>
    </location>
</feature>
<feature type="modified residue" description="Phosphothreonine" evidence="8">
    <location>
        <position position="589"/>
    </location>
</feature>
<feature type="modified residue" description="Phosphoserine" evidence="8">
    <location>
        <position position="592"/>
    </location>
</feature>
<feature type="modified residue" description="Phosphoserine" evidence="8">
    <location>
        <position position="594"/>
    </location>
</feature>
<name>SYK_MOUSE</name>